<comment type="similarity">
    <text evidence="1">Belongs to the UPF0303 family.</text>
</comment>
<organism>
    <name type="scientific">Lactiplantibacillus plantarum (strain ATCC BAA-793 / NCIMB 8826 / WCFS1)</name>
    <name type="common">Lactobacillus plantarum</name>
    <dbReference type="NCBI Taxonomy" id="220668"/>
    <lineage>
        <taxon>Bacteria</taxon>
        <taxon>Bacillati</taxon>
        <taxon>Bacillota</taxon>
        <taxon>Bacilli</taxon>
        <taxon>Lactobacillales</taxon>
        <taxon>Lactobacillaceae</taxon>
        <taxon>Lactiplantibacillus</taxon>
    </lineage>
</organism>
<feature type="chain" id="PRO_0000208918" description="UPF0303 protein lp_3613">
    <location>
        <begin position="1"/>
        <end position="155"/>
    </location>
</feature>
<gene>
    <name type="ordered locus">lp_3613</name>
</gene>
<protein>
    <recommendedName>
        <fullName evidence="1">UPF0303 protein lp_3613</fullName>
    </recommendedName>
</protein>
<dbReference type="EMBL" id="AL935263">
    <property type="protein sequence ID" value="CCC80572.1"/>
    <property type="molecule type" value="Genomic_DNA"/>
</dbReference>
<dbReference type="RefSeq" id="YP_004891086.1">
    <property type="nucleotide sequence ID" value="NC_004567.2"/>
</dbReference>
<dbReference type="SMR" id="Q88S33"/>
<dbReference type="STRING" id="220668.lp_3613"/>
<dbReference type="EnsemblBacteria" id="CCC80572">
    <property type="protein sequence ID" value="CCC80572"/>
    <property type="gene ID" value="lp_3613"/>
</dbReference>
<dbReference type="KEGG" id="lpl:lp_3613"/>
<dbReference type="PATRIC" id="fig|220668.9.peg.3015"/>
<dbReference type="eggNOG" id="COG4702">
    <property type="taxonomic scope" value="Bacteria"/>
</dbReference>
<dbReference type="HOGENOM" id="CLU_101036_2_0_9"/>
<dbReference type="OrthoDB" id="9815315at2"/>
<dbReference type="Proteomes" id="UP000000432">
    <property type="component" value="Chromosome"/>
</dbReference>
<dbReference type="Gene3D" id="3.30.450.150">
    <property type="entry name" value="Haem-degrading domain"/>
    <property type="match status" value="1"/>
</dbReference>
<dbReference type="HAMAP" id="MF_00761">
    <property type="entry name" value="UPF0303"/>
    <property type="match status" value="1"/>
</dbReference>
<dbReference type="InterPro" id="IPR005624">
    <property type="entry name" value="PduO/GlcC-like"/>
</dbReference>
<dbReference type="InterPro" id="IPR038084">
    <property type="entry name" value="PduO/GlcC-like_sf"/>
</dbReference>
<dbReference type="InterPro" id="IPR010371">
    <property type="entry name" value="YBR137W-like"/>
</dbReference>
<dbReference type="NCBIfam" id="NF002696">
    <property type="entry name" value="PRK02487.1-5"/>
    <property type="match status" value="1"/>
</dbReference>
<dbReference type="PANTHER" id="PTHR28255">
    <property type="match status" value="1"/>
</dbReference>
<dbReference type="PANTHER" id="PTHR28255:SF1">
    <property type="entry name" value="UPF0303 PROTEIN YBR137W"/>
    <property type="match status" value="1"/>
</dbReference>
<dbReference type="Pfam" id="PF03928">
    <property type="entry name" value="HbpS-like"/>
    <property type="match status" value="1"/>
</dbReference>
<dbReference type="PIRSF" id="PIRSF008757">
    <property type="entry name" value="UCP008757"/>
    <property type="match status" value="1"/>
</dbReference>
<dbReference type="SUPFAM" id="SSF143744">
    <property type="entry name" value="GlcG-like"/>
    <property type="match status" value="1"/>
</dbReference>
<accession>Q88S33</accession>
<accession>F9ULG5</accession>
<keyword id="KW-1185">Reference proteome</keyword>
<sequence>MMIDQNKIIGQEKNALLTHFNLDDVDKLVISLKKIGRENFDKVCILIKINKRIVFFHAGTQTTNENNLWIHKKANVVDKFDHSSLFEKAIYEENPDKFYINNGLSRRDYAIVGGGFPIGLESTGIIGSLIVSGLTDTEDHDLAYQALIDIQSQQS</sequence>
<proteinExistence type="inferred from homology"/>
<reference key="1">
    <citation type="journal article" date="2003" name="Proc. Natl. Acad. Sci. U.S.A.">
        <title>Complete genome sequence of Lactobacillus plantarum WCFS1.</title>
        <authorList>
            <person name="Kleerebezem M."/>
            <person name="Boekhorst J."/>
            <person name="van Kranenburg R."/>
            <person name="Molenaar D."/>
            <person name="Kuipers O.P."/>
            <person name="Leer R."/>
            <person name="Tarchini R."/>
            <person name="Peters S.A."/>
            <person name="Sandbrink H.M."/>
            <person name="Fiers M.W.E.J."/>
            <person name="Stiekema W."/>
            <person name="Klein Lankhorst R.M."/>
            <person name="Bron P.A."/>
            <person name="Hoffer S.M."/>
            <person name="Nierop Groot M.N."/>
            <person name="Kerkhoven R."/>
            <person name="De Vries M."/>
            <person name="Ursing B."/>
            <person name="De Vos W.M."/>
            <person name="Siezen R.J."/>
        </authorList>
    </citation>
    <scope>NUCLEOTIDE SEQUENCE [LARGE SCALE GENOMIC DNA]</scope>
    <source>
        <strain>ATCC BAA-793 / NCIMB 8826 / WCFS1</strain>
    </source>
</reference>
<reference key="2">
    <citation type="journal article" date="2012" name="J. Bacteriol.">
        <title>Complete resequencing and reannotation of the Lactobacillus plantarum WCFS1 genome.</title>
        <authorList>
            <person name="Siezen R.J."/>
            <person name="Francke C."/>
            <person name="Renckens B."/>
            <person name="Boekhorst J."/>
            <person name="Wels M."/>
            <person name="Kleerebezem M."/>
            <person name="van Hijum S.A."/>
        </authorList>
    </citation>
    <scope>NUCLEOTIDE SEQUENCE [LARGE SCALE GENOMIC DNA]</scope>
    <scope>GENOME REANNOTATION</scope>
    <source>
        <strain>ATCC BAA-793 / NCIMB 8826 / WCFS1</strain>
    </source>
</reference>
<evidence type="ECO:0000255" key="1">
    <source>
        <dbReference type="HAMAP-Rule" id="MF_00761"/>
    </source>
</evidence>
<name>Y3613_LACPL</name>